<protein>
    <recommendedName>
        <fullName evidence="1">2-isopropylmalate synthase</fullName>
        <ecNumber evidence="1">2.3.3.13</ecNumber>
    </recommendedName>
    <alternativeName>
        <fullName evidence="1">Alpha-IPM synthase</fullName>
    </alternativeName>
    <alternativeName>
        <fullName evidence="1">Alpha-isopropylmalate synthase</fullName>
    </alternativeName>
</protein>
<organism>
    <name type="scientific">Polynucleobacter necessarius subsp. necessarius (strain STIR1)</name>
    <dbReference type="NCBI Taxonomy" id="452638"/>
    <lineage>
        <taxon>Bacteria</taxon>
        <taxon>Pseudomonadati</taxon>
        <taxon>Pseudomonadota</taxon>
        <taxon>Betaproteobacteria</taxon>
        <taxon>Burkholderiales</taxon>
        <taxon>Burkholderiaceae</taxon>
        <taxon>Polynucleobacter</taxon>
    </lineage>
</organism>
<accession>B1XUJ3</accession>
<evidence type="ECO:0000255" key="1">
    <source>
        <dbReference type="HAMAP-Rule" id="MF_01025"/>
    </source>
</evidence>
<reference key="1">
    <citation type="journal article" date="2013" name="Proc. Natl. Acad. Sci. U.S.A.">
        <title>Polynucleobacter necessarius, a model for genome reduction in both free-living and symbiotic bacteria.</title>
        <authorList>
            <person name="Boscaro V."/>
            <person name="Felletti M."/>
            <person name="Vannini C."/>
            <person name="Ackerman M.S."/>
            <person name="Chain P.S."/>
            <person name="Malfatti S."/>
            <person name="Vergez L.M."/>
            <person name="Shin M."/>
            <person name="Doak T.G."/>
            <person name="Lynch M."/>
            <person name="Petroni G."/>
        </authorList>
    </citation>
    <scope>NUCLEOTIDE SEQUENCE [LARGE SCALE GENOMIC DNA]</scope>
    <source>
        <strain>STIR1</strain>
    </source>
</reference>
<sequence length="515" mass="55456">MSDKVIIFDTTLRDGEQSPGASMTKDEKVRIARQLERLKVDVIEAGFAASSEGDFQAISAVAAAVKDSIVCSLARANDKDITRAADALQATNAKRIHAFLATSPLHMAVKLRMSPEEVLEQAKRSIRFACNLASDIEFSAEDGYRSEMDFLCRVVEAVINEGASTINIPDTVGYATPELYGEFIKTLRTRVPNSDKAVWSVHCHNDLGMAVANSLAGVKIGGARQIECTINGLGERAGNTALEEIVMSLRTRKDYFDMVCGIDATQIVPASKLVSQITGFIVQPNKAVVGANAFAHTSGIHQDGILKNRDTYEIMRAEDVGWSANKIVLGKLSGRNAFKQRLQELGITVEAEADLNVAFTRFKALADQKSEIFDEDIIAIMSDSAAAEEGEHYKFISLSQHSETGERPKSRVTFRMGDREISSEAEGNGPVDASLNAIEGIAKSGAEQLLYSVNAITSGTQSQGEVTVRLAKGGRIVNGVGTDPDIIAASAKAYLSALNKLHDPSQAKLNAQMTP</sequence>
<proteinExistence type="inferred from homology"/>
<gene>
    <name evidence="1" type="primary">leuA</name>
    <name type="ordered locus">Pnec_0815</name>
</gene>
<name>LEU1_POLNS</name>
<keyword id="KW-0028">Amino-acid biosynthesis</keyword>
<keyword id="KW-0100">Branched-chain amino acid biosynthesis</keyword>
<keyword id="KW-0963">Cytoplasm</keyword>
<keyword id="KW-0432">Leucine biosynthesis</keyword>
<keyword id="KW-0464">Manganese</keyword>
<keyword id="KW-0479">Metal-binding</keyword>
<keyword id="KW-0808">Transferase</keyword>
<feature type="chain" id="PRO_1000149237" description="2-isopropylmalate synthase">
    <location>
        <begin position="1"/>
        <end position="515"/>
    </location>
</feature>
<feature type="domain" description="Pyruvate carboxyltransferase" evidence="1">
    <location>
        <begin position="5"/>
        <end position="268"/>
    </location>
</feature>
<feature type="region of interest" description="Regulatory domain" evidence="1">
    <location>
        <begin position="394"/>
        <end position="515"/>
    </location>
</feature>
<feature type="binding site" evidence="1">
    <location>
        <position position="14"/>
    </location>
    <ligand>
        <name>Mn(2+)</name>
        <dbReference type="ChEBI" id="CHEBI:29035"/>
    </ligand>
</feature>
<feature type="binding site" evidence="1">
    <location>
        <position position="202"/>
    </location>
    <ligand>
        <name>Mn(2+)</name>
        <dbReference type="ChEBI" id="CHEBI:29035"/>
    </ligand>
</feature>
<feature type="binding site" evidence="1">
    <location>
        <position position="204"/>
    </location>
    <ligand>
        <name>Mn(2+)</name>
        <dbReference type="ChEBI" id="CHEBI:29035"/>
    </ligand>
</feature>
<feature type="binding site" evidence="1">
    <location>
        <position position="239"/>
    </location>
    <ligand>
        <name>Mn(2+)</name>
        <dbReference type="ChEBI" id="CHEBI:29035"/>
    </ligand>
</feature>
<dbReference type="EC" id="2.3.3.13" evidence="1"/>
<dbReference type="EMBL" id="CP001010">
    <property type="protein sequence ID" value="ACB44020.1"/>
    <property type="molecule type" value="Genomic_DNA"/>
</dbReference>
<dbReference type="SMR" id="B1XUJ3"/>
<dbReference type="STRING" id="452638.Pnec_0815"/>
<dbReference type="KEGG" id="pne:Pnec_0815"/>
<dbReference type="eggNOG" id="COG0119">
    <property type="taxonomic scope" value="Bacteria"/>
</dbReference>
<dbReference type="HOGENOM" id="CLU_022158_0_1_4"/>
<dbReference type="OrthoDB" id="9803573at2"/>
<dbReference type="UniPathway" id="UPA00048">
    <property type="reaction ID" value="UER00070"/>
</dbReference>
<dbReference type="GO" id="GO:0005829">
    <property type="term" value="C:cytosol"/>
    <property type="evidence" value="ECO:0007669"/>
    <property type="project" value="TreeGrafter"/>
</dbReference>
<dbReference type="GO" id="GO:0003852">
    <property type="term" value="F:2-isopropylmalate synthase activity"/>
    <property type="evidence" value="ECO:0007669"/>
    <property type="project" value="UniProtKB-UniRule"/>
</dbReference>
<dbReference type="GO" id="GO:0003985">
    <property type="term" value="F:acetyl-CoA C-acetyltransferase activity"/>
    <property type="evidence" value="ECO:0007669"/>
    <property type="project" value="UniProtKB-UniRule"/>
</dbReference>
<dbReference type="GO" id="GO:0030145">
    <property type="term" value="F:manganese ion binding"/>
    <property type="evidence" value="ECO:0007669"/>
    <property type="project" value="UniProtKB-UniRule"/>
</dbReference>
<dbReference type="GO" id="GO:0009098">
    <property type="term" value="P:L-leucine biosynthetic process"/>
    <property type="evidence" value="ECO:0007669"/>
    <property type="project" value="UniProtKB-UniRule"/>
</dbReference>
<dbReference type="CDD" id="cd07940">
    <property type="entry name" value="DRE_TIM_IPMS"/>
    <property type="match status" value="1"/>
</dbReference>
<dbReference type="FunFam" id="1.10.238.260:FF:000001">
    <property type="entry name" value="2-isopropylmalate synthase"/>
    <property type="match status" value="1"/>
</dbReference>
<dbReference type="FunFam" id="3.20.20.70:FF:000010">
    <property type="entry name" value="2-isopropylmalate synthase"/>
    <property type="match status" value="1"/>
</dbReference>
<dbReference type="Gene3D" id="1.10.238.260">
    <property type="match status" value="1"/>
</dbReference>
<dbReference type="Gene3D" id="3.30.160.270">
    <property type="match status" value="1"/>
</dbReference>
<dbReference type="Gene3D" id="3.20.20.70">
    <property type="entry name" value="Aldolase class I"/>
    <property type="match status" value="1"/>
</dbReference>
<dbReference type="HAMAP" id="MF_01025">
    <property type="entry name" value="LeuA_type1"/>
    <property type="match status" value="1"/>
</dbReference>
<dbReference type="InterPro" id="IPR050073">
    <property type="entry name" value="2-IPM_HCS-like"/>
</dbReference>
<dbReference type="InterPro" id="IPR013709">
    <property type="entry name" value="2-isopropylmalate_synth_dimer"/>
</dbReference>
<dbReference type="InterPro" id="IPR002034">
    <property type="entry name" value="AIPM/Hcit_synth_CS"/>
</dbReference>
<dbReference type="InterPro" id="IPR013785">
    <property type="entry name" value="Aldolase_TIM"/>
</dbReference>
<dbReference type="InterPro" id="IPR054691">
    <property type="entry name" value="LeuA/HCS_post-cat"/>
</dbReference>
<dbReference type="InterPro" id="IPR036230">
    <property type="entry name" value="LeuA_allosteric_dom_sf"/>
</dbReference>
<dbReference type="InterPro" id="IPR005671">
    <property type="entry name" value="LeuA_bact_synth"/>
</dbReference>
<dbReference type="InterPro" id="IPR000891">
    <property type="entry name" value="PYR_CT"/>
</dbReference>
<dbReference type="NCBIfam" id="TIGR00973">
    <property type="entry name" value="leuA_bact"/>
    <property type="match status" value="1"/>
</dbReference>
<dbReference type="NCBIfam" id="NF002086">
    <property type="entry name" value="PRK00915.1-3"/>
    <property type="match status" value="1"/>
</dbReference>
<dbReference type="NCBIfam" id="NF002087">
    <property type="entry name" value="PRK00915.1-4"/>
    <property type="match status" value="1"/>
</dbReference>
<dbReference type="PANTHER" id="PTHR10277:SF9">
    <property type="entry name" value="2-ISOPROPYLMALATE SYNTHASE 1, CHLOROPLASTIC-RELATED"/>
    <property type="match status" value="1"/>
</dbReference>
<dbReference type="PANTHER" id="PTHR10277">
    <property type="entry name" value="HOMOCITRATE SYNTHASE-RELATED"/>
    <property type="match status" value="1"/>
</dbReference>
<dbReference type="Pfam" id="PF22617">
    <property type="entry name" value="HCS_D2"/>
    <property type="match status" value="1"/>
</dbReference>
<dbReference type="Pfam" id="PF00682">
    <property type="entry name" value="HMGL-like"/>
    <property type="match status" value="1"/>
</dbReference>
<dbReference type="Pfam" id="PF08502">
    <property type="entry name" value="LeuA_dimer"/>
    <property type="match status" value="1"/>
</dbReference>
<dbReference type="SMART" id="SM00917">
    <property type="entry name" value="LeuA_dimer"/>
    <property type="match status" value="1"/>
</dbReference>
<dbReference type="SUPFAM" id="SSF110921">
    <property type="entry name" value="2-isopropylmalate synthase LeuA, allosteric (dimerisation) domain"/>
    <property type="match status" value="1"/>
</dbReference>
<dbReference type="SUPFAM" id="SSF51569">
    <property type="entry name" value="Aldolase"/>
    <property type="match status" value="1"/>
</dbReference>
<dbReference type="PROSITE" id="PS00815">
    <property type="entry name" value="AIPM_HOMOCIT_SYNTH_1"/>
    <property type="match status" value="1"/>
</dbReference>
<dbReference type="PROSITE" id="PS00816">
    <property type="entry name" value="AIPM_HOMOCIT_SYNTH_2"/>
    <property type="match status" value="1"/>
</dbReference>
<dbReference type="PROSITE" id="PS50991">
    <property type="entry name" value="PYR_CT"/>
    <property type="match status" value="1"/>
</dbReference>
<comment type="function">
    <text evidence="1">Catalyzes the condensation of the acetyl group of acetyl-CoA with 3-methyl-2-oxobutanoate (2-ketoisovalerate) to form 3-carboxy-3-hydroxy-4-methylpentanoate (2-isopropylmalate).</text>
</comment>
<comment type="catalytic activity">
    <reaction evidence="1">
        <text>3-methyl-2-oxobutanoate + acetyl-CoA + H2O = (2S)-2-isopropylmalate + CoA + H(+)</text>
        <dbReference type="Rhea" id="RHEA:21524"/>
        <dbReference type="ChEBI" id="CHEBI:1178"/>
        <dbReference type="ChEBI" id="CHEBI:11851"/>
        <dbReference type="ChEBI" id="CHEBI:15377"/>
        <dbReference type="ChEBI" id="CHEBI:15378"/>
        <dbReference type="ChEBI" id="CHEBI:57287"/>
        <dbReference type="ChEBI" id="CHEBI:57288"/>
        <dbReference type="EC" id="2.3.3.13"/>
    </reaction>
</comment>
<comment type="cofactor">
    <cofactor evidence="1">
        <name>Mn(2+)</name>
        <dbReference type="ChEBI" id="CHEBI:29035"/>
    </cofactor>
</comment>
<comment type="pathway">
    <text evidence="1">Amino-acid biosynthesis; L-leucine biosynthesis; L-leucine from 3-methyl-2-oxobutanoate: step 1/4.</text>
</comment>
<comment type="subunit">
    <text evidence="1">Homodimer.</text>
</comment>
<comment type="subcellular location">
    <subcellularLocation>
        <location evidence="1">Cytoplasm</location>
    </subcellularLocation>
</comment>
<comment type="similarity">
    <text evidence="1">Belongs to the alpha-IPM synthase/homocitrate synthase family. LeuA type 1 subfamily.</text>
</comment>